<name>PUR9_PARXL</name>
<proteinExistence type="inferred from homology"/>
<feature type="chain" id="PRO_1000018865" description="Bifunctional purine biosynthesis protein PurH">
    <location>
        <begin position="1"/>
        <end position="521"/>
    </location>
</feature>
<feature type="domain" description="MGS-like" evidence="2">
    <location>
        <begin position="1"/>
        <end position="145"/>
    </location>
</feature>
<sequence>MIKQALISVSDKSGIVDFAKSLSDLGVRILSTGGTAKLLADAGLSVTEVADYTGFPEMLDGRVKTLHPKVHGGILARRDLPEHMAALEKHDIPTIDLLVVNLYPFVQTVSKEECSLEDAIENIDIGGPTMLRSAAKNHRDVTVVVDPADYAVVLDEMRANSNAVSYKTNFRLATKVFAHTAQYDGAITNYLTSLTDELQHSSRNAYPATFNLAFNKAQDLRYGENPHQSAAFYRDLSVPAGALANYNQLQGKELSYNNIADSDAAWECVKTFDVPACVIVKHANPCGVAVGADANEAYAKAFQTDPTSAFGGIIAFNREVDEAAAQAVARQFVEVLIAPSFSAAARQVFAAKQNVRLLEIALGDGHNAFDLKRVGGGLLVQSLDSKNVQPRELRVVTKRHPTPKEMDDLLFAWRVAKYVKSNAIVFCGNGMTLGVGAGQMSRVDSARIASIKAQNAGLTLAGSAVASDAFFPFRDGLDVVVAAGATCVIQPGGSMRDEEVVSAADEHNIAMVLTGVRHFRH</sequence>
<accession>Q13UC4</accession>
<dbReference type="EC" id="2.1.2.3" evidence="1"/>
<dbReference type="EC" id="3.5.4.10" evidence="1"/>
<dbReference type="EMBL" id="CP000270">
    <property type="protein sequence ID" value="ABE32315.1"/>
    <property type="molecule type" value="Genomic_DNA"/>
</dbReference>
<dbReference type="RefSeq" id="WP_011489803.1">
    <property type="nucleotide sequence ID" value="NC_007951.1"/>
</dbReference>
<dbReference type="SMR" id="Q13UC4"/>
<dbReference type="STRING" id="266265.Bxe_A0619"/>
<dbReference type="KEGG" id="bxb:DR64_2787"/>
<dbReference type="KEGG" id="bxe:Bxe_A0619"/>
<dbReference type="PATRIC" id="fig|266265.5.peg.3994"/>
<dbReference type="eggNOG" id="COG0138">
    <property type="taxonomic scope" value="Bacteria"/>
</dbReference>
<dbReference type="OrthoDB" id="9802065at2"/>
<dbReference type="UniPathway" id="UPA00074">
    <property type="reaction ID" value="UER00133"/>
</dbReference>
<dbReference type="UniPathway" id="UPA00074">
    <property type="reaction ID" value="UER00135"/>
</dbReference>
<dbReference type="Proteomes" id="UP000001817">
    <property type="component" value="Chromosome 1"/>
</dbReference>
<dbReference type="GO" id="GO:0005829">
    <property type="term" value="C:cytosol"/>
    <property type="evidence" value="ECO:0007669"/>
    <property type="project" value="TreeGrafter"/>
</dbReference>
<dbReference type="GO" id="GO:0003937">
    <property type="term" value="F:IMP cyclohydrolase activity"/>
    <property type="evidence" value="ECO:0007669"/>
    <property type="project" value="UniProtKB-UniRule"/>
</dbReference>
<dbReference type="GO" id="GO:0004643">
    <property type="term" value="F:phosphoribosylaminoimidazolecarboxamide formyltransferase activity"/>
    <property type="evidence" value="ECO:0007669"/>
    <property type="project" value="UniProtKB-UniRule"/>
</dbReference>
<dbReference type="GO" id="GO:0006189">
    <property type="term" value="P:'de novo' IMP biosynthetic process"/>
    <property type="evidence" value="ECO:0007669"/>
    <property type="project" value="UniProtKB-UniRule"/>
</dbReference>
<dbReference type="CDD" id="cd01421">
    <property type="entry name" value="IMPCH"/>
    <property type="match status" value="1"/>
</dbReference>
<dbReference type="FunFam" id="3.40.140.20:FF:000001">
    <property type="entry name" value="Bifunctional purine biosynthesis protein PurH"/>
    <property type="match status" value="1"/>
</dbReference>
<dbReference type="FunFam" id="3.40.140.20:FF:000002">
    <property type="entry name" value="Bifunctional purine biosynthesis protein PurH"/>
    <property type="match status" value="1"/>
</dbReference>
<dbReference type="FunFam" id="3.40.50.1380:FF:000001">
    <property type="entry name" value="Bifunctional purine biosynthesis protein PurH"/>
    <property type="match status" value="1"/>
</dbReference>
<dbReference type="Gene3D" id="3.40.140.20">
    <property type="match status" value="2"/>
</dbReference>
<dbReference type="Gene3D" id="3.40.50.1380">
    <property type="entry name" value="Methylglyoxal synthase-like domain"/>
    <property type="match status" value="1"/>
</dbReference>
<dbReference type="HAMAP" id="MF_00139">
    <property type="entry name" value="PurH"/>
    <property type="match status" value="1"/>
</dbReference>
<dbReference type="InterPro" id="IPR024051">
    <property type="entry name" value="AICAR_Tfase_dup_dom_sf"/>
</dbReference>
<dbReference type="InterPro" id="IPR016193">
    <property type="entry name" value="Cytidine_deaminase-like"/>
</dbReference>
<dbReference type="InterPro" id="IPR011607">
    <property type="entry name" value="MGS-like_dom"/>
</dbReference>
<dbReference type="InterPro" id="IPR036914">
    <property type="entry name" value="MGS-like_dom_sf"/>
</dbReference>
<dbReference type="InterPro" id="IPR002695">
    <property type="entry name" value="PurH-like"/>
</dbReference>
<dbReference type="NCBIfam" id="NF002049">
    <property type="entry name" value="PRK00881.1"/>
    <property type="match status" value="1"/>
</dbReference>
<dbReference type="NCBIfam" id="TIGR00355">
    <property type="entry name" value="purH"/>
    <property type="match status" value="1"/>
</dbReference>
<dbReference type="PANTHER" id="PTHR11692:SF0">
    <property type="entry name" value="BIFUNCTIONAL PURINE BIOSYNTHESIS PROTEIN ATIC"/>
    <property type="match status" value="1"/>
</dbReference>
<dbReference type="PANTHER" id="PTHR11692">
    <property type="entry name" value="BIFUNCTIONAL PURINE BIOSYNTHESIS PROTEIN PURH"/>
    <property type="match status" value="1"/>
</dbReference>
<dbReference type="Pfam" id="PF01808">
    <property type="entry name" value="AICARFT_IMPCHas"/>
    <property type="match status" value="1"/>
</dbReference>
<dbReference type="Pfam" id="PF02142">
    <property type="entry name" value="MGS"/>
    <property type="match status" value="1"/>
</dbReference>
<dbReference type="PIRSF" id="PIRSF000414">
    <property type="entry name" value="AICARFT_IMPCHas"/>
    <property type="match status" value="1"/>
</dbReference>
<dbReference type="SMART" id="SM00798">
    <property type="entry name" value="AICARFT_IMPCHas"/>
    <property type="match status" value="1"/>
</dbReference>
<dbReference type="SMART" id="SM00851">
    <property type="entry name" value="MGS"/>
    <property type="match status" value="1"/>
</dbReference>
<dbReference type="SUPFAM" id="SSF53927">
    <property type="entry name" value="Cytidine deaminase-like"/>
    <property type="match status" value="1"/>
</dbReference>
<dbReference type="SUPFAM" id="SSF52335">
    <property type="entry name" value="Methylglyoxal synthase-like"/>
    <property type="match status" value="1"/>
</dbReference>
<dbReference type="PROSITE" id="PS51855">
    <property type="entry name" value="MGS"/>
    <property type="match status" value="1"/>
</dbReference>
<gene>
    <name evidence="1" type="primary">purH</name>
    <name type="ordered locus">Bxeno_A3777</name>
    <name type="ORF">Bxe_A0619</name>
</gene>
<keyword id="KW-0378">Hydrolase</keyword>
<keyword id="KW-0511">Multifunctional enzyme</keyword>
<keyword id="KW-0658">Purine biosynthesis</keyword>
<keyword id="KW-1185">Reference proteome</keyword>
<keyword id="KW-0808">Transferase</keyword>
<reference key="1">
    <citation type="journal article" date="2006" name="Proc. Natl. Acad. Sci. U.S.A.">
        <title>Burkholderia xenovorans LB400 harbors a multi-replicon, 9.73-Mbp genome shaped for versatility.</title>
        <authorList>
            <person name="Chain P.S.G."/>
            <person name="Denef V.J."/>
            <person name="Konstantinidis K.T."/>
            <person name="Vergez L.M."/>
            <person name="Agullo L."/>
            <person name="Reyes V.L."/>
            <person name="Hauser L."/>
            <person name="Cordova M."/>
            <person name="Gomez L."/>
            <person name="Gonzalez M."/>
            <person name="Land M."/>
            <person name="Lao V."/>
            <person name="Larimer F."/>
            <person name="LiPuma J.J."/>
            <person name="Mahenthiralingam E."/>
            <person name="Malfatti S.A."/>
            <person name="Marx C.J."/>
            <person name="Parnell J.J."/>
            <person name="Ramette A."/>
            <person name="Richardson P."/>
            <person name="Seeger M."/>
            <person name="Smith D."/>
            <person name="Spilker T."/>
            <person name="Sul W.J."/>
            <person name="Tsoi T.V."/>
            <person name="Ulrich L.E."/>
            <person name="Zhulin I.B."/>
            <person name="Tiedje J.M."/>
        </authorList>
    </citation>
    <scope>NUCLEOTIDE SEQUENCE [LARGE SCALE GENOMIC DNA]</scope>
    <source>
        <strain>LB400</strain>
    </source>
</reference>
<protein>
    <recommendedName>
        <fullName evidence="1">Bifunctional purine biosynthesis protein PurH</fullName>
    </recommendedName>
    <domain>
        <recommendedName>
            <fullName evidence="1">Phosphoribosylaminoimidazolecarboxamide formyltransferase</fullName>
            <ecNumber evidence="1">2.1.2.3</ecNumber>
        </recommendedName>
        <alternativeName>
            <fullName evidence="1">AICAR transformylase</fullName>
        </alternativeName>
    </domain>
    <domain>
        <recommendedName>
            <fullName evidence="1">IMP cyclohydrolase</fullName>
            <ecNumber evidence="1">3.5.4.10</ecNumber>
        </recommendedName>
        <alternativeName>
            <fullName evidence="1">ATIC</fullName>
        </alternativeName>
        <alternativeName>
            <fullName evidence="1">IMP synthase</fullName>
        </alternativeName>
        <alternativeName>
            <fullName evidence="1">Inosinicase</fullName>
        </alternativeName>
    </domain>
</protein>
<organism>
    <name type="scientific">Paraburkholderia xenovorans (strain LB400)</name>
    <dbReference type="NCBI Taxonomy" id="266265"/>
    <lineage>
        <taxon>Bacteria</taxon>
        <taxon>Pseudomonadati</taxon>
        <taxon>Pseudomonadota</taxon>
        <taxon>Betaproteobacteria</taxon>
        <taxon>Burkholderiales</taxon>
        <taxon>Burkholderiaceae</taxon>
        <taxon>Paraburkholderia</taxon>
    </lineage>
</organism>
<comment type="catalytic activity">
    <reaction evidence="1">
        <text>(6R)-10-formyltetrahydrofolate + 5-amino-1-(5-phospho-beta-D-ribosyl)imidazole-4-carboxamide = 5-formamido-1-(5-phospho-D-ribosyl)imidazole-4-carboxamide + (6S)-5,6,7,8-tetrahydrofolate</text>
        <dbReference type="Rhea" id="RHEA:22192"/>
        <dbReference type="ChEBI" id="CHEBI:57453"/>
        <dbReference type="ChEBI" id="CHEBI:58467"/>
        <dbReference type="ChEBI" id="CHEBI:58475"/>
        <dbReference type="ChEBI" id="CHEBI:195366"/>
        <dbReference type="EC" id="2.1.2.3"/>
    </reaction>
</comment>
<comment type="catalytic activity">
    <reaction evidence="1">
        <text>IMP + H2O = 5-formamido-1-(5-phospho-D-ribosyl)imidazole-4-carboxamide</text>
        <dbReference type="Rhea" id="RHEA:18445"/>
        <dbReference type="ChEBI" id="CHEBI:15377"/>
        <dbReference type="ChEBI" id="CHEBI:58053"/>
        <dbReference type="ChEBI" id="CHEBI:58467"/>
        <dbReference type="EC" id="3.5.4.10"/>
    </reaction>
</comment>
<comment type="pathway">
    <text evidence="1">Purine metabolism; IMP biosynthesis via de novo pathway; 5-formamido-1-(5-phospho-D-ribosyl)imidazole-4-carboxamide from 5-amino-1-(5-phospho-D-ribosyl)imidazole-4-carboxamide (10-formyl THF route): step 1/1.</text>
</comment>
<comment type="pathway">
    <text evidence="1">Purine metabolism; IMP biosynthesis via de novo pathway; IMP from 5-formamido-1-(5-phospho-D-ribosyl)imidazole-4-carboxamide: step 1/1.</text>
</comment>
<comment type="domain">
    <text evidence="1">The IMP cyclohydrolase activity resides in the N-terminal region.</text>
</comment>
<comment type="similarity">
    <text evidence="1">Belongs to the PurH family.</text>
</comment>
<evidence type="ECO:0000255" key="1">
    <source>
        <dbReference type="HAMAP-Rule" id="MF_00139"/>
    </source>
</evidence>
<evidence type="ECO:0000255" key="2">
    <source>
        <dbReference type="PROSITE-ProRule" id="PRU01202"/>
    </source>
</evidence>